<organism>
    <name type="scientific">Staphylococcus aureus (strain N315)</name>
    <dbReference type="NCBI Taxonomy" id="158879"/>
    <lineage>
        <taxon>Bacteria</taxon>
        <taxon>Bacillati</taxon>
        <taxon>Bacillota</taxon>
        <taxon>Bacilli</taxon>
        <taxon>Bacillales</taxon>
        <taxon>Staphylococcaceae</taxon>
        <taxon>Staphylococcus</taxon>
    </lineage>
</organism>
<keyword id="KW-0131">Cell cycle</keyword>
<keyword id="KW-0132">Cell division</keyword>
<keyword id="KW-0342">GTP-binding</keyword>
<keyword id="KW-0460">Magnesium</keyword>
<keyword id="KW-0479">Metal-binding</keyword>
<keyword id="KW-0547">Nucleotide-binding</keyword>
<keyword id="KW-0717">Septation</keyword>
<evidence type="ECO:0000255" key="1">
    <source>
        <dbReference type="HAMAP-Rule" id="MF_00321"/>
    </source>
</evidence>
<protein>
    <recommendedName>
        <fullName evidence="1">Probable GTP-binding protein EngB</fullName>
    </recommendedName>
</protein>
<sequence length="196" mass="22685">MKVNPNNIELIISAVKEEQYPETELSEVALSGRSNVGKSTFINSMIGRKNMARTSQQPGKTQTLNFYNIDEQLIFVDVPGYGYAKVSKTQREKFGKMIEEYITKRENLQLVIQLVDLRHDPTQDDILMYNYLKHFDIPTLVICTKEDKIPKGKVQKHIKNIKTQLDMDPDDTIVSYSSIQNNKQQQIWNLIEPYIS</sequence>
<gene>
    <name evidence="1" type="primary">engB</name>
    <name type="ordered locus">SA1497</name>
</gene>
<name>ENGB_STAAN</name>
<accession>P64071</accession>
<accession>Q99TI8</accession>
<reference key="1">
    <citation type="journal article" date="2001" name="Lancet">
        <title>Whole genome sequencing of meticillin-resistant Staphylococcus aureus.</title>
        <authorList>
            <person name="Kuroda M."/>
            <person name="Ohta T."/>
            <person name="Uchiyama I."/>
            <person name="Baba T."/>
            <person name="Yuzawa H."/>
            <person name="Kobayashi I."/>
            <person name="Cui L."/>
            <person name="Oguchi A."/>
            <person name="Aoki K."/>
            <person name="Nagai Y."/>
            <person name="Lian J.-Q."/>
            <person name="Ito T."/>
            <person name="Kanamori M."/>
            <person name="Matsumaru H."/>
            <person name="Maruyama A."/>
            <person name="Murakami H."/>
            <person name="Hosoyama A."/>
            <person name="Mizutani-Ui Y."/>
            <person name="Takahashi N.K."/>
            <person name="Sawano T."/>
            <person name="Inoue R."/>
            <person name="Kaito C."/>
            <person name="Sekimizu K."/>
            <person name="Hirakawa H."/>
            <person name="Kuhara S."/>
            <person name="Goto S."/>
            <person name="Yabuzaki J."/>
            <person name="Kanehisa M."/>
            <person name="Yamashita A."/>
            <person name="Oshima K."/>
            <person name="Furuya K."/>
            <person name="Yoshino C."/>
            <person name="Shiba T."/>
            <person name="Hattori M."/>
            <person name="Ogasawara N."/>
            <person name="Hayashi H."/>
            <person name="Hiramatsu K."/>
        </authorList>
    </citation>
    <scope>NUCLEOTIDE SEQUENCE [LARGE SCALE GENOMIC DNA]</scope>
    <source>
        <strain>N315</strain>
    </source>
</reference>
<reference key="2">
    <citation type="submission" date="2007-10" db="UniProtKB">
        <title>Shotgun proteomic analysis of total and membrane protein extracts of S. aureus strain N315.</title>
        <authorList>
            <person name="Vaezzadeh A.R."/>
            <person name="Deshusses J."/>
            <person name="Lescuyer P."/>
            <person name="Hochstrasser D.F."/>
        </authorList>
    </citation>
    <scope>IDENTIFICATION BY MASS SPECTROMETRY [LARGE SCALE ANALYSIS]</scope>
    <source>
        <strain>N315</strain>
    </source>
</reference>
<proteinExistence type="evidence at protein level"/>
<comment type="function">
    <text evidence="1">Necessary for normal cell division and for the maintenance of normal septation.</text>
</comment>
<comment type="cofactor">
    <cofactor evidence="1">
        <name>Mg(2+)</name>
        <dbReference type="ChEBI" id="CHEBI:18420"/>
    </cofactor>
</comment>
<comment type="similarity">
    <text evidence="1">Belongs to the TRAFAC class TrmE-Era-EngA-EngB-Septin-like GTPase superfamily. EngB GTPase family.</text>
</comment>
<feature type="chain" id="PRO_0000157782" description="Probable GTP-binding protein EngB">
    <location>
        <begin position="1"/>
        <end position="196"/>
    </location>
</feature>
<feature type="domain" description="EngB-type G" evidence="1">
    <location>
        <begin position="24"/>
        <end position="196"/>
    </location>
</feature>
<feature type="binding site" evidence="1">
    <location>
        <begin position="32"/>
        <end position="39"/>
    </location>
    <ligand>
        <name>GTP</name>
        <dbReference type="ChEBI" id="CHEBI:37565"/>
    </ligand>
</feature>
<feature type="binding site" evidence="1">
    <location>
        <position position="39"/>
    </location>
    <ligand>
        <name>Mg(2+)</name>
        <dbReference type="ChEBI" id="CHEBI:18420"/>
    </ligand>
</feature>
<feature type="binding site" evidence="1">
    <location>
        <begin position="59"/>
        <end position="63"/>
    </location>
    <ligand>
        <name>GTP</name>
        <dbReference type="ChEBI" id="CHEBI:37565"/>
    </ligand>
</feature>
<feature type="binding site" evidence="1">
    <location>
        <position position="61"/>
    </location>
    <ligand>
        <name>Mg(2+)</name>
        <dbReference type="ChEBI" id="CHEBI:18420"/>
    </ligand>
</feature>
<feature type="binding site" evidence="1">
    <location>
        <begin position="77"/>
        <end position="80"/>
    </location>
    <ligand>
        <name>GTP</name>
        <dbReference type="ChEBI" id="CHEBI:37565"/>
    </ligand>
</feature>
<feature type="binding site" evidence="1">
    <location>
        <begin position="144"/>
        <end position="147"/>
    </location>
    <ligand>
        <name>GTP</name>
        <dbReference type="ChEBI" id="CHEBI:37565"/>
    </ligand>
</feature>
<feature type="binding site" evidence="1">
    <location>
        <begin position="176"/>
        <end position="178"/>
    </location>
    <ligand>
        <name>GTP</name>
        <dbReference type="ChEBI" id="CHEBI:37565"/>
    </ligand>
</feature>
<dbReference type="EMBL" id="BA000018">
    <property type="protein sequence ID" value="BAB42764.1"/>
    <property type="molecule type" value="Genomic_DNA"/>
</dbReference>
<dbReference type="PIR" id="G89950">
    <property type="entry name" value="G89950"/>
</dbReference>
<dbReference type="SMR" id="P64071"/>
<dbReference type="EnsemblBacteria" id="BAB42764">
    <property type="protein sequence ID" value="BAB42764"/>
    <property type="gene ID" value="BAB42764"/>
</dbReference>
<dbReference type="KEGG" id="sau:SA1497"/>
<dbReference type="HOGENOM" id="CLU_033732_3_0_9"/>
<dbReference type="GO" id="GO:0005829">
    <property type="term" value="C:cytosol"/>
    <property type="evidence" value="ECO:0007669"/>
    <property type="project" value="TreeGrafter"/>
</dbReference>
<dbReference type="GO" id="GO:0005525">
    <property type="term" value="F:GTP binding"/>
    <property type="evidence" value="ECO:0007669"/>
    <property type="project" value="UniProtKB-UniRule"/>
</dbReference>
<dbReference type="GO" id="GO:0046872">
    <property type="term" value="F:metal ion binding"/>
    <property type="evidence" value="ECO:0007669"/>
    <property type="project" value="UniProtKB-KW"/>
</dbReference>
<dbReference type="GO" id="GO:0000917">
    <property type="term" value="P:division septum assembly"/>
    <property type="evidence" value="ECO:0007669"/>
    <property type="project" value="UniProtKB-KW"/>
</dbReference>
<dbReference type="CDD" id="cd01876">
    <property type="entry name" value="YihA_EngB"/>
    <property type="match status" value="1"/>
</dbReference>
<dbReference type="FunFam" id="3.40.50.300:FF:000098">
    <property type="entry name" value="Probable GTP-binding protein EngB"/>
    <property type="match status" value="1"/>
</dbReference>
<dbReference type="Gene3D" id="3.40.50.300">
    <property type="entry name" value="P-loop containing nucleotide triphosphate hydrolases"/>
    <property type="match status" value="1"/>
</dbReference>
<dbReference type="HAMAP" id="MF_00321">
    <property type="entry name" value="GTPase_EngB"/>
    <property type="match status" value="1"/>
</dbReference>
<dbReference type="InterPro" id="IPR030393">
    <property type="entry name" value="G_ENGB_dom"/>
</dbReference>
<dbReference type="InterPro" id="IPR006073">
    <property type="entry name" value="GTP-bd"/>
</dbReference>
<dbReference type="InterPro" id="IPR019987">
    <property type="entry name" value="GTP-bd_ribosome_bio_YsxC"/>
</dbReference>
<dbReference type="InterPro" id="IPR027417">
    <property type="entry name" value="P-loop_NTPase"/>
</dbReference>
<dbReference type="NCBIfam" id="TIGR03598">
    <property type="entry name" value="GTPase_YsxC"/>
    <property type="match status" value="1"/>
</dbReference>
<dbReference type="PANTHER" id="PTHR11649:SF13">
    <property type="entry name" value="ENGB-TYPE G DOMAIN-CONTAINING PROTEIN"/>
    <property type="match status" value="1"/>
</dbReference>
<dbReference type="PANTHER" id="PTHR11649">
    <property type="entry name" value="MSS1/TRME-RELATED GTP-BINDING PROTEIN"/>
    <property type="match status" value="1"/>
</dbReference>
<dbReference type="Pfam" id="PF01926">
    <property type="entry name" value="MMR_HSR1"/>
    <property type="match status" value="1"/>
</dbReference>
<dbReference type="SUPFAM" id="SSF52540">
    <property type="entry name" value="P-loop containing nucleoside triphosphate hydrolases"/>
    <property type="match status" value="1"/>
</dbReference>
<dbReference type="PROSITE" id="PS51706">
    <property type="entry name" value="G_ENGB"/>
    <property type="match status" value="1"/>
</dbReference>